<dbReference type="EC" id="2.5.1.-" evidence="1"/>
<dbReference type="EMBL" id="AE000512">
    <property type="protein sequence ID" value="AAD36469.1"/>
    <property type="molecule type" value="Genomic_DNA"/>
</dbReference>
<dbReference type="PIR" id="G72259">
    <property type="entry name" value="G72259"/>
</dbReference>
<dbReference type="RefSeq" id="NP_229199.1">
    <property type="nucleotide sequence ID" value="NC_000853.1"/>
</dbReference>
<dbReference type="RefSeq" id="WP_004081614.1">
    <property type="nucleotide sequence ID" value="NC_000853.1"/>
</dbReference>
<dbReference type="SMR" id="Q9X1B8"/>
<dbReference type="FunCoup" id="Q9X1B8">
    <property type="interactions" value="315"/>
</dbReference>
<dbReference type="STRING" id="243274.TM_1398"/>
<dbReference type="PaxDb" id="243274-THEMA_07325"/>
<dbReference type="EnsemblBacteria" id="AAD36469">
    <property type="protein sequence ID" value="AAD36469"/>
    <property type="gene ID" value="TM_1398"/>
</dbReference>
<dbReference type="KEGG" id="tma:TM1398"/>
<dbReference type="KEGG" id="tmi:THEMA_07325"/>
<dbReference type="KEGG" id="tmm:Tmari_1405"/>
<dbReference type="KEGG" id="tmw:THMA_1427"/>
<dbReference type="eggNOG" id="COG0020">
    <property type="taxonomic scope" value="Bacteria"/>
</dbReference>
<dbReference type="InParanoid" id="Q9X1B8"/>
<dbReference type="OrthoDB" id="4191603at2"/>
<dbReference type="Proteomes" id="UP000008183">
    <property type="component" value="Chromosome"/>
</dbReference>
<dbReference type="GO" id="GO:0000287">
    <property type="term" value="F:magnesium ion binding"/>
    <property type="evidence" value="ECO:0007669"/>
    <property type="project" value="UniProtKB-UniRule"/>
</dbReference>
<dbReference type="GO" id="GO:0004659">
    <property type="term" value="F:prenyltransferase activity"/>
    <property type="evidence" value="ECO:0007669"/>
    <property type="project" value="UniProtKB-UniRule"/>
</dbReference>
<dbReference type="GO" id="GO:0016094">
    <property type="term" value="P:polyprenol biosynthetic process"/>
    <property type="evidence" value="ECO:0000318"/>
    <property type="project" value="GO_Central"/>
</dbReference>
<dbReference type="CDD" id="cd00475">
    <property type="entry name" value="Cis_IPPS"/>
    <property type="match status" value="1"/>
</dbReference>
<dbReference type="FunFam" id="3.40.1180.10:FF:000001">
    <property type="entry name" value="(2E,6E)-farnesyl-diphosphate-specific ditrans,polycis-undecaprenyl-diphosphate synthase"/>
    <property type="match status" value="1"/>
</dbReference>
<dbReference type="Gene3D" id="3.40.1180.10">
    <property type="entry name" value="Decaprenyl diphosphate synthase-like"/>
    <property type="match status" value="1"/>
</dbReference>
<dbReference type="HAMAP" id="MF_01139">
    <property type="entry name" value="ISPT"/>
    <property type="match status" value="1"/>
</dbReference>
<dbReference type="InterPro" id="IPR001441">
    <property type="entry name" value="UPP_synth-like"/>
</dbReference>
<dbReference type="InterPro" id="IPR018520">
    <property type="entry name" value="UPP_synth-like_CS"/>
</dbReference>
<dbReference type="InterPro" id="IPR036424">
    <property type="entry name" value="UPP_synth-like_sf"/>
</dbReference>
<dbReference type="NCBIfam" id="NF011405">
    <property type="entry name" value="PRK14830.1"/>
    <property type="match status" value="1"/>
</dbReference>
<dbReference type="NCBIfam" id="NF011414">
    <property type="entry name" value="PRK14841.1"/>
    <property type="match status" value="1"/>
</dbReference>
<dbReference type="NCBIfam" id="TIGR00055">
    <property type="entry name" value="uppS"/>
    <property type="match status" value="1"/>
</dbReference>
<dbReference type="PANTHER" id="PTHR10291:SF0">
    <property type="entry name" value="DEHYDRODOLICHYL DIPHOSPHATE SYNTHASE 2"/>
    <property type="match status" value="1"/>
</dbReference>
<dbReference type="PANTHER" id="PTHR10291">
    <property type="entry name" value="DEHYDRODOLICHYL DIPHOSPHATE SYNTHASE FAMILY MEMBER"/>
    <property type="match status" value="1"/>
</dbReference>
<dbReference type="Pfam" id="PF01255">
    <property type="entry name" value="Prenyltransf"/>
    <property type="match status" value="1"/>
</dbReference>
<dbReference type="SUPFAM" id="SSF64005">
    <property type="entry name" value="Undecaprenyl diphosphate synthase"/>
    <property type="match status" value="1"/>
</dbReference>
<dbReference type="PROSITE" id="PS01066">
    <property type="entry name" value="UPP_SYNTHASE"/>
    <property type="match status" value="1"/>
</dbReference>
<keyword id="KW-0460">Magnesium</keyword>
<keyword id="KW-0479">Metal-binding</keyword>
<keyword id="KW-1185">Reference proteome</keyword>
<keyword id="KW-0808">Transferase</keyword>
<reference key="1">
    <citation type="journal article" date="1999" name="Nature">
        <title>Evidence for lateral gene transfer between Archaea and Bacteria from genome sequence of Thermotoga maritima.</title>
        <authorList>
            <person name="Nelson K.E."/>
            <person name="Clayton R.A."/>
            <person name="Gill S.R."/>
            <person name="Gwinn M.L."/>
            <person name="Dodson R.J."/>
            <person name="Haft D.H."/>
            <person name="Hickey E.K."/>
            <person name="Peterson J.D."/>
            <person name="Nelson W.C."/>
            <person name="Ketchum K.A."/>
            <person name="McDonald L.A."/>
            <person name="Utterback T.R."/>
            <person name="Malek J.A."/>
            <person name="Linher K.D."/>
            <person name="Garrett M.M."/>
            <person name="Stewart A.M."/>
            <person name="Cotton M.D."/>
            <person name="Pratt M.S."/>
            <person name="Phillips C.A."/>
            <person name="Richardson D.L."/>
            <person name="Heidelberg J.F."/>
            <person name="Sutton G.G."/>
            <person name="Fleischmann R.D."/>
            <person name="Eisen J.A."/>
            <person name="White O."/>
            <person name="Salzberg S.L."/>
            <person name="Smith H.O."/>
            <person name="Venter J.C."/>
            <person name="Fraser C.M."/>
        </authorList>
    </citation>
    <scope>NUCLEOTIDE SEQUENCE [LARGE SCALE GENOMIC DNA]</scope>
    <source>
        <strain>ATCC 43589 / DSM 3109 / JCM 10099 / NBRC 100826 / MSB8</strain>
    </source>
</reference>
<gene>
    <name evidence="1" type="primary">uppS</name>
    <name type="ordered locus">TM_1398</name>
</gene>
<protein>
    <recommendedName>
        <fullName evidence="1">Isoprenyl transferase</fullName>
        <ecNumber evidence="1">2.5.1.-</ecNumber>
    </recommendedName>
</protein>
<accession>Q9X1B8</accession>
<organism>
    <name type="scientific">Thermotoga maritima (strain ATCC 43589 / DSM 3109 / JCM 10099 / NBRC 100826 / MSB8)</name>
    <dbReference type="NCBI Taxonomy" id="243274"/>
    <lineage>
        <taxon>Bacteria</taxon>
        <taxon>Thermotogati</taxon>
        <taxon>Thermotogota</taxon>
        <taxon>Thermotogae</taxon>
        <taxon>Thermotogales</taxon>
        <taxon>Thermotogaceae</taxon>
        <taxon>Thermotoga</taxon>
    </lineage>
</organism>
<name>ISPT_THEMA</name>
<feature type="chain" id="PRO_0000123701" description="Isoprenyl transferase">
    <location>
        <begin position="1"/>
        <end position="233"/>
    </location>
</feature>
<feature type="active site" evidence="1">
    <location>
        <position position="12"/>
    </location>
</feature>
<feature type="active site" description="Proton acceptor" evidence="1">
    <location>
        <position position="60"/>
    </location>
</feature>
<feature type="binding site" evidence="1">
    <location>
        <position position="12"/>
    </location>
    <ligand>
        <name>Mg(2+)</name>
        <dbReference type="ChEBI" id="CHEBI:18420"/>
    </ligand>
</feature>
<feature type="binding site" evidence="1">
    <location>
        <begin position="13"/>
        <end position="16"/>
    </location>
    <ligand>
        <name>substrate</name>
    </ligand>
</feature>
<feature type="binding site" evidence="1">
    <location>
        <position position="17"/>
    </location>
    <ligand>
        <name>substrate</name>
    </ligand>
</feature>
<feature type="binding site" evidence="1">
    <location>
        <position position="25"/>
    </location>
    <ligand>
        <name>substrate</name>
    </ligand>
</feature>
<feature type="binding site" evidence="1">
    <location>
        <position position="29"/>
    </location>
    <ligand>
        <name>substrate</name>
    </ligand>
</feature>
<feature type="binding site" evidence="1">
    <location>
        <begin position="57"/>
        <end position="59"/>
    </location>
    <ligand>
        <name>substrate</name>
    </ligand>
</feature>
<feature type="binding site" evidence="1">
    <location>
        <position position="61"/>
    </location>
    <ligand>
        <name>substrate</name>
    </ligand>
</feature>
<feature type="binding site" evidence="1">
    <location>
        <position position="63"/>
    </location>
    <ligand>
        <name>substrate</name>
    </ligand>
</feature>
<feature type="binding site" evidence="1">
    <location>
        <position position="178"/>
    </location>
    <ligand>
        <name>substrate</name>
    </ligand>
</feature>
<feature type="binding site" evidence="1">
    <location>
        <begin position="184"/>
        <end position="186"/>
    </location>
    <ligand>
        <name>substrate</name>
    </ligand>
</feature>
<feature type="binding site" evidence="1">
    <location>
        <position position="197"/>
    </location>
    <ligand>
        <name>Mg(2+)</name>
        <dbReference type="ChEBI" id="CHEBI:18420"/>
    </ligand>
</feature>
<proteinExistence type="inferred from homology"/>
<sequence>MRIPQHVAIIMDGNGRWAKKRGLPRIKGHQRGAEVLHNTVKWSLELGIKYLTAFSFSTENWKRPKEEVEFLMDLFVQMIDREMELLRRERVRVRILGRKEGLPEKVLKKWQEVEEKTKEFDRMTLIIAFNYGGRREILDAVEFILKDVSHGKKIELTEETFRQYLYLPDVPDPDLIIRTSGEMRLSNFLLWQSAYSELYFFKKLWPDFTKRDFLRAIESYSKRERRFGGLING</sequence>
<comment type="function">
    <text evidence="1">Catalyzes the condensation of isopentenyl diphosphate (IPP) with allylic pyrophosphates generating different type of terpenoids.</text>
</comment>
<comment type="cofactor">
    <cofactor evidence="1">
        <name>Mg(2+)</name>
        <dbReference type="ChEBI" id="CHEBI:18420"/>
    </cofactor>
    <text evidence="1">Binds 2 magnesium ions per subunit.</text>
</comment>
<comment type="subunit">
    <text evidence="1">Homodimer.</text>
</comment>
<comment type="similarity">
    <text evidence="1">Belongs to the UPP synthase family.</text>
</comment>
<evidence type="ECO:0000255" key="1">
    <source>
        <dbReference type="HAMAP-Rule" id="MF_01139"/>
    </source>
</evidence>